<proteinExistence type="inferred from homology"/>
<sequence length="234" mass="25682">MSGLPIATNLYFDAHFHRHGVKLLPNEFYTTREDMVLVTVLGSCVAACLHDPIGRIGGMNHFMLPDDGADPSAAASESMRYGAYAMEVLINELIKAGGRRERFEAKVFGGAAVLAGMTTINIGDRNADFVRRYLALERIRITAEDLQGVHPRKVAFMPHTGQAMVKKLRVQAPDVAAREAALAREAVDPHGERAPRVRPRVELFGTPAPKAQAKPRIELFGMRATQPATRKQEA</sequence>
<dbReference type="EC" id="3.5.1.44" evidence="1"/>
<dbReference type="EMBL" id="CP000526">
    <property type="protein sequence ID" value="ABM51595.1"/>
    <property type="molecule type" value="Genomic_DNA"/>
</dbReference>
<dbReference type="RefSeq" id="WP_004198646.1">
    <property type="nucleotide sequence ID" value="NC_008785.1"/>
</dbReference>
<dbReference type="SMR" id="A1V905"/>
<dbReference type="GeneID" id="92980525"/>
<dbReference type="KEGG" id="bmv:BMASAVP1_A3430"/>
<dbReference type="HOGENOM" id="CLU_087854_0_0_4"/>
<dbReference type="GO" id="GO:0050568">
    <property type="term" value="F:protein-glutamine glutaminase activity"/>
    <property type="evidence" value="ECO:0007669"/>
    <property type="project" value="UniProtKB-UniRule"/>
</dbReference>
<dbReference type="GO" id="GO:0006935">
    <property type="term" value="P:chemotaxis"/>
    <property type="evidence" value="ECO:0007669"/>
    <property type="project" value="UniProtKB-UniRule"/>
</dbReference>
<dbReference type="CDD" id="cd16352">
    <property type="entry name" value="CheD"/>
    <property type="match status" value="1"/>
</dbReference>
<dbReference type="Gene3D" id="3.30.1330.200">
    <property type="match status" value="1"/>
</dbReference>
<dbReference type="HAMAP" id="MF_01440">
    <property type="entry name" value="CheD"/>
    <property type="match status" value="1"/>
</dbReference>
<dbReference type="InterPro" id="IPR038592">
    <property type="entry name" value="CheD-like_sf"/>
</dbReference>
<dbReference type="InterPro" id="IPR005659">
    <property type="entry name" value="Chemorcpt_Glu_NH3ase_CheD"/>
</dbReference>
<dbReference type="InterPro" id="IPR011324">
    <property type="entry name" value="Cytotoxic_necrot_fac-like_cat"/>
</dbReference>
<dbReference type="NCBIfam" id="NF010013">
    <property type="entry name" value="PRK13487.1"/>
    <property type="match status" value="1"/>
</dbReference>
<dbReference type="NCBIfam" id="NF010014">
    <property type="entry name" value="PRK13489.1"/>
    <property type="match status" value="1"/>
</dbReference>
<dbReference type="PANTHER" id="PTHR35147">
    <property type="entry name" value="CHEMORECEPTOR GLUTAMINE DEAMIDASE CHED-RELATED"/>
    <property type="match status" value="1"/>
</dbReference>
<dbReference type="PANTHER" id="PTHR35147:SF2">
    <property type="entry name" value="CHEMORECEPTOR GLUTAMINE DEAMIDASE CHED-RELATED"/>
    <property type="match status" value="1"/>
</dbReference>
<dbReference type="Pfam" id="PF03975">
    <property type="entry name" value="CheD"/>
    <property type="match status" value="1"/>
</dbReference>
<dbReference type="SUPFAM" id="SSF64438">
    <property type="entry name" value="CNF1/YfiH-like putative cysteine hydrolases"/>
    <property type="match status" value="1"/>
</dbReference>
<organism>
    <name type="scientific">Burkholderia mallei (strain SAVP1)</name>
    <dbReference type="NCBI Taxonomy" id="320388"/>
    <lineage>
        <taxon>Bacteria</taxon>
        <taxon>Pseudomonadati</taxon>
        <taxon>Pseudomonadota</taxon>
        <taxon>Betaproteobacteria</taxon>
        <taxon>Burkholderiales</taxon>
        <taxon>Burkholderiaceae</taxon>
        <taxon>Burkholderia</taxon>
        <taxon>pseudomallei group</taxon>
    </lineage>
</organism>
<keyword id="KW-0145">Chemotaxis</keyword>
<keyword id="KW-0378">Hydrolase</keyword>
<accession>A1V905</accession>
<protein>
    <recommendedName>
        <fullName evidence="1">Probable chemoreceptor glutamine deamidase CheD</fullName>
        <ecNumber evidence="1">3.5.1.44</ecNumber>
    </recommendedName>
</protein>
<evidence type="ECO:0000255" key="1">
    <source>
        <dbReference type="HAMAP-Rule" id="MF_01440"/>
    </source>
</evidence>
<feature type="chain" id="PRO_1000068546" description="Probable chemoreceptor glutamine deamidase CheD">
    <location>
        <begin position="1"/>
        <end position="234"/>
    </location>
</feature>
<reference key="1">
    <citation type="journal article" date="2010" name="Genome Biol. Evol.">
        <title>Continuing evolution of Burkholderia mallei through genome reduction and large-scale rearrangements.</title>
        <authorList>
            <person name="Losada L."/>
            <person name="Ronning C.M."/>
            <person name="DeShazer D."/>
            <person name="Woods D."/>
            <person name="Fedorova N."/>
            <person name="Kim H.S."/>
            <person name="Shabalina S.A."/>
            <person name="Pearson T.R."/>
            <person name="Brinkac L."/>
            <person name="Tan P."/>
            <person name="Nandi T."/>
            <person name="Crabtree J."/>
            <person name="Badger J."/>
            <person name="Beckstrom-Sternberg S."/>
            <person name="Saqib M."/>
            <person name="Schutzer S.E."/>
            <person name="Keim P."/>
            <person name="Nierman W.C."/>
        </authorList>
    </citation>
    <scope>NUCLEOTIDE SEQUENCE [LARGE SCALE GENOMIC DNA]</scope>
    <source>
        <strain>SAVP1</strain>
    </source>
</reference>
<gene>
    <name evidence="1" type="primary">cheD</name>
    <name type="ordered locus">BMASAVP1_A3430</name>
</gene>
<comment type="function">
    <text evidence="1">Probably deamidates glutamine residues to glutamate on methyl-accepting chemotaxis receptors (MCPs), playing an important role in chemotaxis.</text>
</comment>
<comment type="catalytic activity">
    <reaction evidence="1">
        <text>L-glutaminyl-[protein] + H2O = L-glutamyl-[protein] + NH4(+)</text>
        <dbReference type="Rhea" id="RHEA:16441"/>
        <dbReference type="Rhea" id="RHEA-COMP:10207"/>
        <dbReference type="Rhea" id="RHEA-COMP:10208"/>
        <dbReference type="ChEBI" id="CHEBI:15377"/>
        <dbReference type="ChEBI" id="CHEBI:28938"/>
        <dbReference type="ChEBI" id="CHEBI:29973"/>
        <dbReference type="ChEBI" id="CHEBI:30011"/>
        <dbReference type="EC" id="3.5.1.44"/>
    </reaction>
</comment>
<comment type="similarity">
    <text evidence="1">Belongs to the CheD family.</text>
</comment>
<name>CHED_BURMS</name>